<gene>
    <name evidence="7 14" type="primary">Usp2</name>
    <name evidence="14" type="ORF">CG14619</name>
</gene>
<organism evidence="15">
    <name type="scientific">Drosophila melanogaster</name>
    <name type="common">Fruit fly</name>
    <dbReference type="NCBI Taxonomy" id="7227"/>
    <lineage>
        <taxon>Eukaryota</taxon>
        <taxon>Metazoa</taxon>
        <taxon>Ecdysozoa</taxon>
        <taxon>Arthropoda</taxon>
        <taxon>Hexapoda</taxon>
        <taxon>Insecta</taxon>
        <taxon>Pterygota</taxon>
        <taxon>Neoptera</taxon>
        <taxon>Endopterygota</taxon>
        <taxon>Diptera</taxon>
        <taxon>Brachycera</taxon>
        <taxon>Muscomorpha</taxon>
        <taxon>Ephydroidea</taxon>
        <taxon>Drosophilidae</taxon>
        <taxon>Drosophila</taxon>
        <taxon>Sophophora</taxon>
    </lineage>
</organism>
<reference evidence="15" key="1">
    <citation type="journal article" date="2000" name="Science">
        <title>The genome sequence of Drosophila melanogaster.</title>
        <authorList>
            <person name="Adams M.D."/>
            <person name="Celniker S.E."/>
            <person name="Holt R.A."/>
            <person name="Evans C.A."/>
            <person name="Gocayne J.D."/>
            <person name="Amanatides P.G."/>
            <person name="Scherer S.E."/>
            <person name="Li P.W."/>
            <person name="Hoskins R.A."/>
            <person name="Galle R.F."/>
            <person name="George R.A."/>
            <person name="Lewis S.E."/>
            <person name="Richards S."/>
            <person name="Ashburner M."/>
            <person name="Henderson S.N."/>
            <person name="Sutton G.G."/>
            <person name="Wortman J.R."/>
            <person name="Yandell M.D."/>
            <person name="Zhang Q."/>
            <person name="Chen L.X."/>
            <person name="Brandon R.C."/>
            <person name="Rogers Y.-H.C."/>
            <person name="Blazej R.G."/>
            <person name="Champe M."/>
            <person name="Pfeiffer B.D."/>
            <person name="Wan K.H."/>
            <person name="Doyle C."/>
            <person name="Baxter E.G."/>
            <person name="Helt G."/>
            <person name="Nelson C.R."/>
            <person name="Miklos G.L.G."/>
            <person name="Abril J.F."/>
            <person name="Agbayani A."/>
            <person name="An H.-J."/>
            <person name="Andrews-Pfannkoch C."/>
            <person name="Baldwin D."/>
            <person name="Ballew R.M."/>
            <person name="Basu A."/>
            <person name="Baxendale J."/>
            <person name="Bayraktaroglu L."/>
            <person name="Beasley E.M."/>
            <person name="Beeson K.Y."/>
            <person name="Benos P.V."/>
            <person name="Berman B.P."/>
            <person name="Bhandari D."/>
            <person name="Bolshakov S."/>
            <person name="Borkova D."/>
            <person name="Botchan M.R."/>
            <person name="Bouck J."/>
            <person name="Brokstein P."/>
            <person name="Brottier P."/>
            <person name="Burtis K.C."/>
            <person name="Busam D.A."/>
            <person name="Butler H."/>
            <person name="Cadieu E."/>
            <person name="Center A."/>
            <person name="Chandra I."/>
            <person name="Cherry J.M."/>
            <person name="Cawley S."/>
            <person name="Dahlke C."/>
            <person name="Davenport L.B."/>
            <person name="Davies P."/>
            <person name="de Pablos B."/>
            <person name="Delcher A."/>
            <person name="Deng Z."/>
            <person name="Mays A.D."/>
            <person name="Dew I."/>
            <person name="Dietz S.M."/>
            <person name="Dodson K."/>
            <person name="Doup L.E."/>
            <person name="Downes M."/>
            <person name="Dugan-Rocha S."/>
            <person name="Dunkov B.C."/>
            <person name="Dunn P."/>
            <person name="Durbin K.J."/>
            <person name="Evangelista C.C."/>
            <person name="Ferraz C."/>
            <person name="Ferriera S."/>
            <person name="Fleischmann W."/>
            <person name="Fosler C."/>
            <person name="Gabrielian A.E."/>
            <person name="Garg N.S."/>
            <person name="Gelbart W.M."/>
            <person name="Glasser K."/>
            <person name="Glodek A."/>
            <person name="Gong F."/>
            <person name="Gorrell J.H."/>
            <person name="Gu Z."/>
            <person name="Guan P."/>
            <person name="Harris M."/>
            <person name="Harris N.L."/>
            <person name="Harvey D.A."/>
            <person name="Heiman T.J."/>
            <person name="Hernandez J.R."/>
            <person name="Houck J."/>
            <person name="Hostin D."/>
            <person name="Houston K.A."/>
            <person name="Howland T.J."/>
            <person name="Wei M.-H."/>
            <person name="Ibegwam C."/>
            <person name="Jalali M."/>
            <person name="Kalush F."/>
            <person name="Karpen G.H."/>
            <person name="Ke Z."/>
            <person name="Kennison J.A."/>
            <person name="Ketchum K.A."/>
            <person name="Kimmel B.E."/>
            <person name="Kodira C.D."/>
            <person name="Kraft C.L."/>
            <person name="Kravitz S."/>
            <person name="Kulp D."/>
            <person name="Lai Z."/>
            <person name="Lasko P."/>
            <person name="Lei Y."/>
            <person name="Levitsky A.A."/>
            <person name="Li J.H."/>
            <person name="Li Z."/>
            <person name="Liang Y."/>
            <person name="Lin X."/>
            <person name="Liu X."/>
            <person name="Mattei B."/>
            <person name="McIntosh T.C."/>
            <person name="McLeod M.P."/>
            <person name="McPherson D."/>
            <person name="Merkulov G."/>
            <person name="Milshina N.V."/>
            <person name="Mobarry C."/>
            <person name="Morris J."/>
            <person name="Moshrefi A."/>
            <person name="Mount S.M."/>
            <person name="Moy M."/>
            <person name="Murphy B."/>
            <person name="Murphy L."/>
            <person name="Muzny D.M."/>
            <person name="Nelson D.L."/>
            <person name="Nelson D.R."/>
            <person name="Nelson K.A."/>
            <person name="Nixon K."/>
            <person name="Nusskern D.R."/>
            <person name="Pacleb J.M."/>
            <person name="Palazzolo M."/>
            <person name="Pittman G.S."/>
            <person name="Pan S."/>
            <person name="Pollard J."/>
            <person name="Puri V."/>
            <person name="Reese M.G."/>
            <person name="Reinert K."/>
            <person name="Remington K."/>
            <person name="Saunders R.D.C."/>
            <person name="Scheeler F."/>
            <person name="Shen H."/>
            <person name="Shue B.C."/>
            <person name="Siden-Kiamos I."/>
            <person name="Simpson M."/>
            <person name="Skupski M.P."/>
            <person name="Smith T.J."/>
            <person name="Spier E."/>
            <person name="Spradling A.C."/>
            <person name="Stapleton M."/>
            <person name="Strong R."/>
            <person name="Sun E."/>
            <person name="Svirskas R."/>
            <person name="Tector C."/>
            <person name="Turner R."/>
            <person name="Venter E."/>
            <person name="Wang A.H."/>
            <person name="Wang X."/>
            <person name="Wang Z.-Y."/>
            <person name="Wassarman D.A."/>
            <person name="Weinstock G.M."/>
            <person name="Weissenbach J."/>
            <person name="Williams S.M."/>
            <person name="Woodage T."/>
            <person name="Worley K.C."/>
            <person name="Wu D."/>
            <person name="Yang S."/>
            <person name="Yao Q.A."/>
            <person name="Ye J."/>
            <person name="Yeh R.-F."/>
            <person name="Zaveri J.S."/>
            <person name="Zhan M."/>
            <person name="Zhang G."/>
            <person name="Zhao Q."/>
            <person name="Zheng L."/>
            <person name="Zheng X.H."/>
            <person name="Zhong F.N."/>
            <person name="Zhong W."/>
            <person name="Zhou X."/>
            <person name="Zhu S.C."/>
            <person name="Zhu X."/>
            <person name="Smith H.O."/>
            <person name="Gibbs R.A."/>
            <person name="Myers E.W."/>
            <person name="Rubin G.M."/>
            <person name="Venter J.C."/>
        </authorList>
    </citation>
    <scope>NUCLEOTIDE SEQUENCE [LARGE SCALE GENOMIC DNA]</scope>
    <source>
        <strain evidence="15">Berkeley</strain>
    </source>
</reference>
<reference evidence="15" key="2">
    <citation type="journal article" date="2002" name="Genome Biol.">
        <title>Annotation of the Drosophila melanogaster euchromatic genome: a systematic review.</title>
        <authorList>
            <person name="Misra S."/>
            <person name="Crosby M.A."/>
            <person name="Mungall C.J."/>
            <person name="Matthews B.B."/>
            <person name="Campbell K.S."/>
            <person name="Hradecky P."/>
            <person name="Huang Y."/>
            <person name="Kaminker J.S."/>
            <person name="Millburn G.H."/>
            <person name="Prochnik S.E."/>
            <person name="Smith C.D."/>
            <person name="Tupy J.L."/>
            <person name="Whitfield E.J."/>
            <person name="Bayraktaroglu L."/>
            <person name="Berman B.P."/>
            <person name="Bettencourt B.R."/>
            <person name="Celniker S.E."/>
            <person name="de Grey A.D.N.J."/>
            <person name="Drysdale R.A."/>
            <person name="Harris N.L."/>
            <person name="Richter J."/>
            <person name="Russo S."/>
            <person name="Schroeder A.J."/>
            <person name="Shu S.Q."/>
            <person name="Stapleton M."/>
            <person name="Yamada C."/>
            <person name="Ashburner M."/>
            <person name="Gelbart W.M."/>
            <person name="Rubin G.M."/>
            <person name="Lewis S.E."/>
        </authorList>
    </citation>
    <scope>GENOME REANNOTATION</scope>
    <source>
        <strain evidence="15">Berkeley</strain>
    </source>
</reference>
<reference evidence="11" key="3">
    <citation type="journal article" date="2002" name="Genome Biol.">
        <title>A Drosophila full-length cDNA resource.</title>
        <authorList>
            <person name="Stapleton M."/>
            <person name="Carlson J.W."/>
            <person name="Brokstein P."/>
            <person name="Yu C."/>
            <person name="Champe M."/>
            <person name="George R.A."/>
            <person name="Guarin H."/>
            <person name="Kronmiller B."/>
            <person name="Pacleb J.M."/>
            <person name="Park S."/>
            <person name="Wan K.H."/>
            <person name="Rubin G.M."/>
            <person name="Celniker S.E."/>
        </authorList>
    </citation>
    <scope>NUCLEOTIDE SEQUENCE [LARGE SCALE MRNA] (ISOFORM A)</scope>
    <source>
        <strain evidence="11">Berkeley</strain>
    </source>
</reference>
<reference evidence="12 13" key="4">
    <citation type="submission" date="2009-11" db="EMBL/GenBank/DDBJ databases">
        <authorList>
            <person name="Stapleton M."/>
            <person name="Booth B."/>
            <person name="Brokstein P."/>
            <person name="Hong L."/>
            <person name="Agbayani A."/>
            <person name="Carlson J."/>
            <person name="Champe M."/>
            <person name="Chavez C."/>
            <person name="Dorsett V."/>
            <person name="Dresnek D."/>
            <person name="Farfan D."/>
            <person name="Frise E."/>
            <person name="George R."/>
            <person name="Gonzalez M."/>
            <person name="Guarin H."/>
            <person name="Kronmiller B."/>
            <person name="Li P."/>
            <person name="Liao G."/>
            <person name="Miranda A."/>
            <person name="Mungall C.J."/>
            <person name="Nunoo J."/>
            <person name="Pacleb J."/>
            <person name="Paragas V."/>
            <person name="Park S."/>
            <person name="Patel S."/>
            <person name="Phouanenavong S."/>
            <person name="Sandler J."/>
            <person name="Wan K."/>
            <person name="Yu C."/>
            <person name="Lewis S.E."/>
            <person name="Rubin G.M."/>
            <person name="Celniker S."/>
        </authorList>
    </citation>
    <scope>NUCLEOTIDE SEQUENCE [LARGE SCALE MRNA] (ISOFORM C)</scope>
    <source>
        <strain evidence="12 13">Berkeley</strain>
        <tissue evidence="12">Testis</tissue>
    </source>
</reference>
<reference evidence="9" key="5">
    <citation type="journal article" date="2013" name="Genetics">
        <title>The Drosophila wings apart gene anchors a novel, evolutionarily conserved pathway of neuromuscular development.</title>
        <authorList>
            <person name="Morriss G.R."/>
            <person name="Jaramillo C.T."/>
            <person name="Mikolajczak C.M."/>
            <person name="Duong S."/>
            <person name="Jaramillo M.S."/>
            <person name="Cripps R.M."/>
        </authorList>
    </citation>
    <scope>DISRUPTION PHENOTYPE</scope>
</reference>
<reference evidence="9" key="6">
    <citation type="journal article" date="2014" name="Cell Commun. Signal.">
        <title>Identifying USPs regulating immune signals in Drosophila: USP2 deubiquitinates Imd and promotes its degradation by interacting with the proteasome.</title>
        <authorList>
            <person name="Engel E."/>
            <person name="Viargues P."/>
            <person name="Mortier M."/>
            <person name="Taillebourg E."/>
            <person name="Coute Y."/>
            <person name="Thevenon D."/>
            <person name="Fauvarque M.O."/>
        </authorList>
    </citation>
    <scope>FUNCTION</scope>
    <scope>CATALYTIC ACTIVITY</scope>
    <scope>INTERACTION WITH IMD AND RPT6 (ISOFORM A)</scope>
    <scope>DISRUPTION PHENOTYPE</scope>
    <scope>MUTAGENESIS OF CYS-622</scope>
</reference>
<reference evidence="9" key="7">
    <citation type="journal article" date="2016" name="PLoS ONE">
        <title>USP2-45 is a circadian clock output effector regulating calcium absorption at the post-translational level.</title>
        <authorList>
            <person name="Pouly D."/>
            <person name="Chenaux S."/>
            <person name="Martin V."/>
            <person name="Babis M."/>
            <person name="Koch R."/>
            <person name="Nagoshi E."/>
            <person name="Katanaev V.L."/>
            <person name="Gachon F."/>
            <person name="Staub O."/>
        </authorList>
    </citation>
    <scope>FUNCTION</scope>
    <scope>DISRUPTION PHENOTYPE</scope>
</reference>
<feature type="chain" id="PRO_0000441821" description="Ubiquitin carboxyl-terminal hydrolase Usp2">
    <location>
        <begin position="1"/>
        <end position="938"/>
    </location>
</feature>
<feature type="domain" description="USP" evidence="2">
    <location>
        <begin position="613"/>
        <end position="938"/>
    </location>
</feature>
<feature type="region of interest" description="Disordered" evidence="3">
    <location>
        <begin position="1"/>
        <end position="53"/>
    </location>
</feature>
<feature type="region of interest" description="Disordered" evidence="3">
    <location>
        <begin position="91"/>
        <end position="117"/>
    </location>
</feature>
<feature type="region of interest" description="Disordered" evidence="3">
    <location>
        <begin position="130"/>
        <end position="254"/>
    </location>
</feature>
<feature type="region of interest" description="Disordered" evidence="3">
    <location>
        <begin position="273"/>
        <end position="297"/>
    </location>
</feature>
<feature type="region of interest" description="Disordered" evidence="3">
    <location>
        <begin position="360"/>
        <end position="410"/>
    </location>
</feature>
<feature type="region of interest" description="Disordered" evidence="3">
    <location>
        <begin position="500"/>
        <end position="610"/>
    </location>
</feature>
<feature type="compositionally biased region" description="Low complexity" evidence="3">
    <location>
        <begin position="22"/>
        <end position="36"/>
    </location>
</feature>
<feature type="compositionally biased region" description="Low complexity" evidence="3">
    <location>
        <begin position="137"/>
        <end position="158"/>
    </location>
</feature>
<feature type="compositionally biased region" description="Low complexity" evidence="3">
    <location>
        <begin position="167"/>
        <end position="177"/>
    </location>
</feature>
<feature type="compositionally biased region" description="Low complexity" evidence="3">
    <location>
        <begin position="198"/>
        <end position="227"/>
    </location>
</feature>
<feature type="compositionally biased region" description="Low complexity" evidence="3">
    <location>
        <begin position="275"/>
        <end position="289"/>
    </location>
</feature>
<feature type="compositionally biased region" description="Polar residues" evidence="3">
    <location>
        <begin position="392"/>
        <end position="410"/>
    </location>
</feature>
<feature type="compositionally biased region" description="Low complexity" evidence="3">
    <location>
        <begin position="502"/>
        <end position="555"/>
    </location>
</feature>
<feature type="compositionally biased region" description="Low complexity" evidence="3">
    <location>
        <begin position="574"/>
        <end position="583"/>
    </location>
</feature>
<feature type="compositionally biased region" description="Basic and acidic residues" evidence="3">
    <location>
        <begin position="592"/>
        <end position="610"/>
    </location>
</feature>
<feature type="active site" description="Nucleophile" evidence="2 10">
    <location>
        <position position="622"/>
    </location>
</feature>
<feature type="active site" description="Proton acceptor" evidence="2">
    <location>
        <position position="895"/>
    </location>
</feature>
<feature type="binding site" evidence="1">
    <location>
        <position position="765"/>
    </location>
    <ligand>
        <name>Zn(2+)</name>
        <dbReference type="ChEBI" id="CHEBI:29105"/>
    </ligand>
</feature>
<feature type="binding site" evidence="1">
    <location>
        <position position="768"/>
    </location>
    <ligand>
        <name>Zn(2+)</name>
        <dbReference type="ChEBI" id="CHEBI:29105"/>
    </ligand>
</feature>
<feature type="binding site" evidence="1">
    <location>
        <position position="814"/>
    </location>
    <ligand>
        <name>Zn(2+)</name>
        <dbReference type="ChEBI" id="CHEBI:29105"/>
    </ligand>
</feature>
<feature type="binding site" evidence="1">
    <location>
        <position position="817"/>
    </location>
    <ligand>
        <name>Zn(2+)</name>
        <dbReference type="ChEBI" id="CHEBI:29105"/>
    </ligand>
</feature>
<feature type="splice variant" id="VSP_059120" description="In isoform A." evidence="9">
    <original>MMLDIKKTRGFHKIPQASKLQSTTKTSSVVATSASSQNEVPSPGGSAGSKVGATNPVRAANQRFFLVSSYKDPTFLKAECDLAHAHVTTSKVKTTLQPHRRSRAGEDSRNNNYNTSRAPTLINMRRPSLFNGNQQPTTTNSTTINNTTSRNTTSNTSNGVLKYSVRSTTATATSTSTRNYGKLKPLNNNQTTAGVAMMNGHTNNNNNNTRNSSNINNGGNNNMQRQQQQHDDISFIDSDDPPATGGPEAGISTTKTSICYFKPITPPLQLRHEQNQVQQQEEQPQPSSSKSASHRYPRPKSTIIASAHSNFAASFEKFSGGLYRQTNGETNIESKTSSNARRYGIDSLSIKASIEKFNNLSGQKRQNPGSGSGIGPGSATASGLGGGRLSVASRSNHGSQAGGSSSNLQQRYSSDLDNIRVAAGYSSSLTRAAYRTTATMNSVSTPVAVTSELGGPISGDGGETATAMGQPTSKVTVRGAHSNRQPIECDSVVLTNKASKDATTAATPTVATATATHTPATSSVSTVTVTAAAPNSASDS</original>
    <variation>MRVIAPRRSSTSAAGSGSLYGTSAVGTSSGSTTSSNSTSGSHHISITGSGAVDRTSGGAATNGYSRISSSYDRGSSLSKWLPTSSGGSNSSGYGSSYYPTSYSTFSANSGSSSASYAPRSSVQRSSVGTTSSTSYMSGGSGSSSSAYRTSSYLSGSSYDSPTYSRYGLPRKAASRITTNGDSLSGSAKREDYGLRRGHDTVKKPPISGGSVGHNCSSSTASRDTKAVDGNKRLSSSSSSPSLARLVATSGLDIYEKYSPANYKPNCELSRSRSGHSETDLENGSNKETTPTCTVTLDRPWSSTSRYSRLYRNSSDAGGDSSASAKKLGSGKYSISSSSSSGDVPTATFTLRSKRTRRNQAEEVPTSTGVEQAGPAAPPPTPPPPPPPPPPTNGHKPAESNGGLEAKLNGLSLLSTSPKRNAIYERNQETADDAGVSQDTADNADVSTSATFKLNDSSK</variation>
    <location>
        <begin position="1"/>
        <end position="540"/>
    </location>
</feature>
<feature type="mutagenesis site" description="Loss of activity." evidence="5">
    <original>C</original>
    <variation>S</variation>
    <location>
        <position position="622"/>
    </location>
</feature>
<evidence type="ECO:0000250" key="1">
    <source>
        <dbReference type="UniProtKB" id="O75604"/>
    </source>
</evidence>
<evidence type="ECO:0000255" key="2">
    <source>
        <dbReference type="PROSITE-ProRule" id="PRU01035"/>
    </source>
</evidence>
<evidence type="ECO:0000256" key="3">
    <source>
        <dbReference type="SAM" id="MobiDB-lite"/>
    </source>
</evidence>
<evidence type="ECO:0000269" key="4">
    <source>
    </source>
</evidence>
<evidence type="ECO:0000269" key="5">
    <source>
    </source>
</evidence>
<evidence type="ECO:0000269" key="6">
    <source>
    </source>
</evidence>
<evidence type="ECO:0000303" key="7">
    <source>
    </source>
</evidence>
<evidence type="ECO:0000303" key="8">
    <source>
    </source>
</evidence>
<evidence type="ECO:0000305" key="9"/>
<evidence type="ECO:0000305" key="10">
    <source>
    </source>
</evidence>
<evidence type="ECO:0000312" key="11">
    <source>
        <dbReference type="EMBL" id="AAL39948.1"/>
    </source>
</evidence>
<evidence type="ECO:0000312" key="12">
    <source>
        <dbReference type="EMBL" id="AAO39652.1"/>
    </source>
</evidence>
<evidence type="ECO:0000312" key="13">
    <source>
        <dbReference type="EMBL" id="ACY46087.1"/>
    </source>
</evidence>
<evidence type="ECO:0000312" key="14">
    <source>
        <dbReference type="FlyBase" id="FBgn0031187"/>
    </source>
</evidence>
<evidence type="ECO:0000312" key="15">
    <source>
        <dbReference type="Proteomes" id="UP000000803"/>
    </source>
</evidence>
<proteinExistence type="evidence at protein level"/>
<keyword id="KW-0025">Alternative splicing</keyword>
<keyword id="KW-0378">Hydrolase</keyword>
<keyword id="KW-0391">Immunity</keyword>
<keyword id="KW-0399">Innate immunity</keyword>
<keyword id="KW-0479">Metal-binding</keyword>
<keyword id="KW-0645">Protease</keyword>
<keyword id="KW-1185">Reference proteome</keyword>
<keyword id="KW-0788">Thiol protease</keyword>
<keyword id="KW-0833">Ubl conjugation pathway</keyword>
<keyword id="KW-0862">Zinc</keyword>
<protein>
    <recommendedName>
        <fullName evidence="8">Ubiquitin carboxyl-terminal hydrolase Usp2</fullName>
        <ecNumber evidence="5">3.4.19.12</ecNumber>
    </recommendedName>
    <alternativeName>
        <fullName evidence="7">Ubiquitin specific protease 2</fullName>
    </alternativeName>
</protein>
<dbReference type="EC" id="3.4.19.12" evidence="5"/>
<dbReference type="EMBL" id="AE014298">
    <property type="protein sequence ID" value="AAF50952.2"/>
    <property type="molecule type" value="Genomic_DNA"/>
</dbReference>
<dbReference type="EMBL" id="AE014298">
    <property type="protein sequence ID" value="AAN09564.1"/>
    <property type="molecule type" value="Genomic_DNA"/>
</dbReference>
<dbReference type="EMBL" id="AE014298">
    <property type="protein sequence ID" value="AAN09565.1"/>
    <property type="molecule type" value="Genomic_DNA"/>
</dbReference>
<dbReference type="EMBL" id="AE014298">
    <property type="protein sequence ID" value="AAN09566.1"/>
    <property type="molecule type" value="Genomic_DNA"/>
</dbReference>
<dbReference type="EMBL" id="AE014298">
    <property type="protein sequence ID" value="AFH07511.1"/>
    <property type="molecule type" value="Genomic_DNA"/>
</dbReference>
<dbReference type="EMBL" id="AE014298">
    <property type="protein sequence ID" value="AFH07512.1"/>
    <property type="molecule type" value="Genomic_DNA"/>
</dbReference>
<dbReference type="EMBL" id="AY069803">
    <property type="protein sequence ID" value="AAL39948.1"/>
    <property type="molecule type" value="mRNA"/>
</dbReference>
<dbReference type="EMBL" id="BT003648">
    <property type="protein sequence ID" value="AAO39652.1"/>
    <property type="molecule type" value="mRNA"/>
</dbReference>
<dbReference type="EMBL" id="BT100212">
    <property type="protein sequence ID" value="ACY46087.1"/>
    <property type="molecule type" value="mRNA"/>
</dbReference>
<dbReference type="RefSeq" id="NP_001245799.1">
    <molecule id="Q8IQ27-1"/>
    <property type="nucleotide sequence ID" value="NM_001258870.2"/>
</dbReference>
<dbReference type="RefSeq" id="NP_001245800.1">
    <molecule id="Q8IQ27-1"/>
    <property type="nucleotide sequence ID" value="NM_001258871.2"/>
</dbReference>
<dbReference type="RefSeq" id="NP_608462.1">
    <molecule id="Q8IQ27-2"/>
    <property type="nucleotide sequence ID" value="NM_134618.3"/>
</dbReference>
<dbReference type="RefSeq" id="NP_728453.1">
    <molecule id="Q8IQ27-2"/>
    <property type="nucleotide sequence ID" value="NM_167775.2"/>
</dbReference>
<dbReference type="RefSeq" id="NP_728454.1">
    <molecule id="Q8IQ27-2"/>
    <property type="nucleotide sequence ID" value="NM_167776.3"/>
</dbReference>
<dbReference type="RefSeq" id="NP_728455.1">
    <molecule id="Q8IQ27-1"/>
    <property type="nucleotide sequence ID" value="NM_167777.3"/>
</dbReference>
<dbReference type="SMR" id="Q8IQ27"/>
<dbReference type="FunCoup" id="Q8IQ27">
    <property type="interactions" value="216"/>
</dbReference>
<dbReference type="IntAct" id="Q8IQ27">
    <property type="interactions" value="12"/>
</dbReference>
<dbReference type="STRING" id="7227.FBpp0308590"/>
<dbReference type="MEROPS" id="C19.A24"/>
<dbReference type="PaxDb" id="7227-FBpp0077041"/>
<dbReference type="DNASU" id="33132"/>
<dbReference type="EnsemblMetazoa" id="FBtr0077346">
    <molecule id="Q8IQ27-2"/>
    <property type="protein sequence ID" value="FBpp0077038"/>
    <property type="gene ID" value="FBgn0031187"/>
</dbReference>
<dbReference type="EnsemblMetazoa" id="FBtr0077347">
    <molecule id="Q8IQ27-2"/>
    <property type="protein sequence ID" value="FBpp0077039"/>
    <property type="gene ID" value="FBgn0031187"/>
</dbReference>
<dbReference type="EnsemblMetazoa" id="FBtr0077348">
    <molecule id="Q8IQ27-2"/>
    <property type="protein sequence ID" value="FBpp0077040"/>
    <property type="gene ID" value="FBgn0031187"/>
</dbReference>
<dbReference type="EnsemblMetazoa" id="FBtr0077349">
    <molecule id="Q8IQ27-1"/>
    <property type="protein sequence ID" value="FBpp0077041"/>
    <property type="gene ID" value="FBgn0031187"/>
</dbReference>
<dbReference type="EnsemblMetazoa" id="FBtr0309238">
    <molecule id="Q8IQ27-1"/>
    <property type="protein sequence ID" value="FBpp0301177"/>
    <property type="gene ID" value="FBgn0031187"/>
</dbReference>
<dbReference type="EnsemblMetazoa" id="FBtr0309239">
    <molecule id="Q8IQ27-1"/>
    <property type="protein sequence ID" value="FBpp0301178"/>
    <property type="gene ID" value="FBgn0031187"/>
</dbReference>
<dbReference type="GeneID" id="33132"/>
<dbReference type="KEGG" id="dme:Dmel_CG14619"/>
<dbReference type="UCSC" id="CG14619-RA">
    <property type="organism name" value="d. melanogaster"/>
</dbReference>
<dbReference type="AGR" id="FB:FBgn0031187"/>
<dbReference type="CTD" id="9099"/>
<dbReference type="FlyBase" id="FBgn0031187">
    <property type="gene designation" value="Usp2"/>
</dbReference>
<dbReference type="VEuPathDB" id="VectorBase:FBgn0031187"/>
<dbReference type="eggNOG" id="KOG1868">
    <property type="taxonomic scope" value="Eukaryota"/>
</dbReference>
<dbReference type="GeneTree" id="ENSGT00940000155545"/>
<dbReference type="HOGENOM" id="CLU_005103_0_0_1"/>
<dbReference type="InParanoid" id="Q8IQ27"/>
<dbReference type="OrthoDB" id="265306at2759"/>
<dbReference type="Reactome" id="R-DME-5689880">
    <property type="pathway name" value="Ub-specific processing proteases"/>
</dbReference>
<dbReference type="BioGRID-ORCS" id="33132">
    <property type="hits" value="0 hits in 3 CRISPR screens"/>
</dbReference>
<dbReference type="GenomeRNAi" id="33132"/>
<dbReference type="PRO" id="PR:Q8IQ27"/>
<dbReference type="Proteomes" id="UP000000803">
    <property type="component" value="Chromosome X"/>
</dbReference>
<dbReference type="Bgee" id="FBgn0031187">
    <property type="expression patterns" value="Expressed in indirect flight muscle cell (Drosophila) in post-embryonic organism and 278 other cell types or tissues"/>
</dbReference>
<dbReference type="ExpressionAtlas" id="Q8IQ27">
    <property type="expression patterns" value="baseline and differential"/>
</dbReference>
<dbReference type="GO" id="GO:0005737">
    <property type="term" value="C:cytoplasm"/>
    <property type="evidence" value="ECO:0000318"/>
    <property type="project" value="GO_Central"/>
</dbReference>
<dbReference type="GO" id="GO:0004843">
    <property type="term" value="F:cysteine-type deubiquitinase activity"/>
    <property type="evidence" value="ECO:0000250"/>
    <property type="project" value="FlyBase"/>
</dbReference>
<dbReference type="GO" id="GO:1990380">
    <property type="term" value="F:K48-linked deubiquitinase activity"/>
    <property type="evidence" value="ECO:0000314"/>
    <property type="project" value="FlyBase"/>
</dbReference>
<dbReference type="GO" id="GO:0046872">
    <property type="term" value="F:metal ion binding"/>
    <property type="evidence" value="ECO:0007669"/>
    <property type="project" value="UniProtKB-KW"/>
</dbReference>
<dbReference type="GO" id="GO:0070628">
    <property type="term" value="F:proteasome binding"/>
    <property type="evidence" value="ECO:0000353"/>
    <property type="project" value="FlyBase"/>
</dbReference>
<dbReference type="GO" id="GO:0045087">
    <property type="term" value="P:innate immune response"/>
    <property type="evidence" value="ECO:0007669"/>
    <property type="project" value="UniProtKB-KW"/>
</dbReference>
<dbReference type="GO" id="GO:0002785">
    <property type="term" value="P:negative regulation of antimicrobial peptide production"/>
    <property type="evidence" value="ECO:0000315"/>
    <property type="project" value="FlyBase"/>
</dbReference>
<dbReference type="GO" id="GO:0051926">
    <property type="term" value="P:negative regulation of calcium ion transport"/>
    <property type="evidence" value="ECO:0000315"/>
    <property type="project" value="UniProtKB"/>
</dbReference>
<dbReference type="GO" id="GO:0061060">
    <property type="term" value="P:negative regulation of peptidoglycan recognition protein signaling pathway"/>
    <property type="evidence" value="ECO:0000315"/>
    <property type="project" value="FlyBase"/>
</dbReference>
<dbReference type="GO" id="GO:0045805">
    <property type="term" value="P:positive regulation of eclosion"/>
    <property type="evidence" value="ECO:0000315"/>
    <property type="project" value="UniProtKB"/>
</dbReference>
<dbReference type="GO" id="GO:1901800">
    <property type="term" value="P:positive regulation of proteasomal protein catabolic process"/>
    <property type="evidence" value="ECO:0000315"/>
    <property type="project" value="FlyBase"/>
</dbReference>
<dbReference type="GO" id="GO:0016579">
    <property type="term" value="P:protein deubiquitination"/>
    <property type="evidence" value="ECO:0007669"/>
    <property type="project" value="InterPro"/>
</dbReference>
<dbReference type="GO" id="GO:0006508">
    <property type="term" value="P:proteolysis"/>
    <property type="evidence" value="ECO:0007669"/>
    <property type="project" value="UniProtKB-KW"/>
</dbReference>
<dbReference type="CDD" id="cd02674">
    <property type="entry name" value="Peptidase_C19R"/>
    <property type="match status" value="1"/>
</dbReference>
<dbReference type="FunFam" id="3.90.70.10:FF:000083">
    <property type="entry name" value="Uncharacterized protein, isoform B"/>
    <property type="match status" value="1"/>
</dbReference>
<dbReference type="Gene3D" id="3.90.70.10">
    <property type="entry name" value="Cysteine proteinases"/>
    <property type="match status" value="1"/>
</dbReference>
<dbReference type="InterPro" id="IPR038765">
    <property type="entry name" value="Papain-like_cys_pep_sf"/>
</dbReference>
<dbReference type="InterPro" id="IPR001394">
    <property type="entry name" value="Peptidase_C19_UCH"/>
</dbReference>
<dbReference type="InterPro" id="IPR050185">
    <property type="entry name" value="Ub_carboxyl-term_hydrolase"/>
</dbReference>
<dbReference type="InterPro" id="IPR018200">
    <property type="entry name" value="USP_CS"/>
</dbReference>
<dbReference type="InterPro" id="IPR028889">
    <property type="entry name" value="USP_dom"/>
</dbReference>
<dbReference type="PANTHER" id="PTHR21646">
    <property type="entry name" value="UBIQUITIN CARBOXYL-TERMINAL HYDROLASE"/>
    <property type="match status" value="1"/>
</dbReference>
<dbReference type="PANTHER" id="PTHR21646:SF23">
    <property type="entry name" value="UBIQUITIN CARBOXYL-TERMINAL HYDROLASE USP2"/>
    <property type="match status" value="1"/>
</dbReference>
<dbReference type="Pfam" id="PF00443">
    <property type="entry name" value="UCH"/>
    <property type="match status" value="1"/>
</dbReference>
<dbReference type="SUPFAM" id="SSF54001">
    <property type="entry name" value="Cysteine proteinases"/>
    <property type="match status" value="1"/>
</dbReference>
<dbReference type="PROSITE" id="PS00972">
    <property type="entry name" value="USP_1"/>
    <property type="match status" value="1"/>
</dbReference>
<dbReference type="PROSITE" id="PS00973">
    <property type="entry name" value="USP_2"/>
    <property type="match status" value="1"/>
</dbReference>
<dbReference type="PROSITE" id="PS50235">
    <property type="entry name" value="USP_3"/>
    <property type="match status" value="1"/>
</dbReference>
<accession>Q8IQ27</accession>
<accession>Q8T9E4</accession>
<accession>Q9VR54</accession>
<sequence length="938" mass="101704">MMLDIKKTRGFHKIPQASKLQSTTKTSSVVATSASSQNEVPSPGGSAGSKVGATNPVRAANQRFFLVSSYKDPTFLKAECDLAHAHVTTSKVKTTLQPHRRSRAGEDSRNNNYNTSRAPTLINMRRPSLFNGNQQPTTTNSTTINNTTSRNTTSNTSNGVLKYSVRSTTATATSTSTRNYGKLKPLNNNQTTAGVAMMNGHTNNNNNNTRNSSNINNGGNNNMQRQQQQHDDISFIDSDDPPATGGPEAGISTTKTSICYFKPITPPLQLRHEQNQVQQQEEQPQPSSSKSASHRYPRPKSTIIASAHSNFAASFEKFSGGLYRQTNGETNIESKTSSNARRYGIDSLSIKASIEKFNNLSGQKRQNPGSGSGIGPGSATASGLGGGRLSVASRSNHGSQAGGSSSNLQQRYSSDLDNIRVAAGYSSSLTRAAYRTTATMNSVSTPVAVTSELGGPISGDGGETATAMGQPTSKVTVRGAHSNRQPIECDSVVLTNKASKDATTAATPTVATATATHTPATSSVSTVTVTAAAPNSASDSTLARSGTGSSSTARSVLPPMTPTSSRYWDRDSGTSRSSIGTSSALNSSSLKHNSDDGYKTASSSRDEKSEGLCGLRNIGNTCFMNSVIQCLSHTQELTRFLRSHHGSRSLSTKDQQILHEFAKLIQEMWTANVHTVTPMELKRAFSTKHRMYSDYNQQDAQEFLRFFLDSLHSALNSGVKGETLNIDDNLSDNKKADLTWEWYTRHENSLVRDLFVGQLKSTLKCTTCGNTSVTFDPFWDLSVPLPSSSRCKLEACLDLFIREEVLDGDEMPTCAKCKTRRKCTKSFTIQRFPKYLVIHLKRFSETRWSKLSNIVEFPTSDSELNMGSYGANSNSNVHYSLYAISNHMGSTAGGHYVALCKHPVSRKWHEFNDNIVSDALSENHLVSSSAYILFYERT</sequence>
<comment type="function">
    <text evidence="5 6">Hydrolase that deubiquitinates polyubiquitinated target proteins (PubMed:25027767). Required for preventing the activation of the Toll signaling cascades under unchallenged conditions (PubMed:25027767). Essential for bodily calcium homeostasis (PubMed:26756164).</text>
</comment>
<comment type="function">
    <molecule>Isoform A</molecule>
    <text evidence="5">Required for preventing the activation of the immune deficiency (Imd) signaling cascade under unchallenged conditions. Regulates the Imd pathway by specifically removing 'Lys-48'-linked ubiquitin from imd. Also promotes imd degradation probably by binding to imd and enhancing its association with the proteasome.</text>
</comment>
<comment type="catalytic activity">
    <reaction evidence="5">
        <text>Thiol-dependent hydrolysis of ester, thioester, amide, peptide and isopeptide bonds formed by the C-terminal Gly of ubiquitin (a 76-residue protein attached to proteins as an intracellular targeting signal).</text>
        <dbReference type="EC" id="3.4.19.12"/>
    </reaction>
</comment>
<comment type="subunit">
    <molecule>Isoform A</molecule>
    <text evidence="5">Interacts (via N-terminus) with imd (via N-terminus). Interacts with Rpt6.</text>
</comment>
<comment type="alternative products">
    <event type="alternative splicing"/>
    <isoform>
        <id>Q8IQ27-1</id>
        <name evidence="14">C</name>
        <name evidence="14">F</name>
        <name evidence="14">G</name>
        <sequence type="displayed"/>
    </isoform>
    <isoform>
        <id>Q8IQ27-2</id>
        <name evidence="14">A</name>
        <name evidence="14">D</name>
        <name evidence="14">E</name>
        <sequence type="described" ref="VSP_059120"/>
    </isoform>
</comment>
<comment type="disruption phenotype">
    <text evidence="4 5 6">RNAi-mediated knockdown is pupal lethal (PubMed:24026097, PubMed:26756164). Pharate adults removed from their pupal cases display severe defects in head eversion, with head structures forming within the thoracic area (PubMed:24026097). Pupal lethality can be rescued by supplementing their diet with CaCl2 (PubMed:26756164). RNAi-mediated knockdown in the fat body results in the activation of the Imd and Toll signaling pathways under unchallenged conditions, with constitutive expression of the Toll (Drs, IM1) and Imd (DptA, Def, Atta) antimicrobial peptides (PubMed:25027767). Flies infected with E.coli display enhanced expression of Atta and DptA compared to controls (PubMed:25027767). Double knockdown with imd prevents the enhanced expression of Atta and DptA in uninfected and infected flies (PubMed:25027767). RNAi-mediated knockdown in the clock neurons (tim) does not affect the free-running period of circadian rhythms under light-dark (LD) and constant dark (DD) conditions (PubMed:26756164).</text>
</comment>
<comment type="similarity">
    <text evidence="2">Belongs to the peptidase C19 family.</text>
</comment>
<name>UBP2_DROME</name>